<reference key="1">
    <citation type="journal article" date="1999" name="Nat. Genet.">
        <title>Comparative genomes of Chlamydia pneumoniae and C. trachomatis.</title>
        <authorList>
            <person name="Kalman S."/>
            <person name="Mitchell W.P."/>
            <person name="Marathe R."/>
            <person name="Lammel C.J."/>
            <person name="Fan J."/>
            <person name="Hyman R.W."/>
            <person name="Olinger L."/>
            <person name="Grimwood J."/>
            <person name="Davis R.W."/>
            <person name="Stephens R.S."/>
        </authorList>
    </citation>
    <scope>NUCLEOTIDE SEQUENCE [LARGE SCALE GENOMIC DNA]</scope>
    <source>
        <strain>CWL029</strain>
    </source>
</reference>
<reference key="2">
    <citation type="journal article" date="2000" name="Nucleic Acids Res.">
        <title>Genome sequences of Chlamydia trachomatis MoPn and Chlamydia pneumoniae AR39.</title>
        <authorList>
            <person name="Read T.D."/>
            <person name="Brunham R.C."/>
            <person name="Shen C."/>
            <person name="Gill S.R."/>
            <person name="Heidelberg J.F."/>
            <person name="White O."/>
            <person name="Hickey E.K."/>
            <person name="Peterson J.D."/>
            <person name="Utterback T.R."/>
            <person name="Berry K.J."/>
            <person name="Bass S."/>
            <person name="Linher K.D."/>
            <person name="Weidman J.F."/>
            <person name="Khouri H.M."/>
            <person name="Craven B."/>
            <person name="Bowman C."/>
            <person name="Dodson R.J."/>
            <person name="Gwinn M.L."/>
            <person name="Nelson W.C."/>
            <person name="DeBoy R.T."/>
            <person name="Kolonay J.F."/>
            <person name="McClarty G."/>
            <person name="Salzberg S.L."/>
            <person name="Eisen J.A."/>
            <person name="Fraser C.M."/>
        </authorList>
    </citation>
    <scope>NUCLEOTIDE SEQUENCE [LARGE SCALE GENOMIC DNA]</scope>
    <source>
        <strain>AR39</strain>
    </source>
</reference>
<reference key="3">
    <citation type="journal article" date="2000" name="Nucleic Acids Res.">
        <title>Comparison of whole genome sequences of Chlamydia pneumoniae J138 from Japan and CWL029 from USA.</title>
        <authorList>
            <person name="Shirai M."/>
            <person name="Hirakawa H."/>
            <person name="Kimoto M."/>
            <person name="Tabuchi M."/>
            <person name="Kishi F."/>
            <person name="Ouchi K."/>
            <person name="Shiba T."/>
            <person name="Ishii K."/>
            <person name="Hattori M."/>
            <person name="Kuhara S."/>
            <person name="Nakazawa T."/>
        </authorList>
    </citation>
    <scope>NUCLEOTIDE SEQUENCE [LARGE SCALE GENOMIC DNA]</scope>
    <source>
        <strain>J138</strain>
    </source>
</reference>
<reference key="4">
    <citation type="submission" date="2002-05" db="EMBL/GenBank/DDBJ databases">
        <title>The genome sequence of Chlamydia pneumoniae TW183 and comparison with other Chlamydia strains based on whole genome sequence analysis.</title>
        <authorList>
            <person name="Geng M.M."/>
            <person name="Schuhmacher A."/>
            <person name="Muehldorfer I."/>
            <person name="Bensch K.W."/>
            <person name="Schaefer K.P."/>
            <person name="Schneider S."/>
            <person name="Pohl T."/>
            <person name="Essig A."/>
            <person name="Marre R."/>
            <person name="Melchers K."/>
        </authorList>
    </citation>
    <scope>NUCLEOTIDE SEQUENCE [LARGE SCALE GENOMIC DNA]</scope>
    <source>
        <strain>TW-183</strain>
    </source>
</reference>
<comment type="similarity">
    <text evidence="1">Belongs to the UPF0098 family.</text>
</comment>
<evidence type="ECO:0000305" key="1"/>
<protein>
    <recommendedName>
        <fullName>UPF0098 protein CPn_0877/CP_0992/CPj0877/CpB0906</fullName>
    </recommendedName>
</protein>
<dbReference type="EMBL" id="AE001363">
    <property type="protein sequence ID" value="AAD19015.1"/>
    <property type="molecule type" value="Genomic_DNA"/>
</dbReference>
<dbReference type="EMBL" id="AE002161">
    <property type="protein sequence ID" value="AAF38771.1"/>
    <property type="molecule type" value="Genomic_DNA"/>
</dbReference>
<dbReference type="EMBL" id="BA000008">
    <property type="protein sequence ID" value="BAA99085.1"/>
    <property type="molecule type" value="Genomic_DNA"/>
</dbReference>
<dbReference type="EMBL" id="AE009440">
    <property type="protein sequence ID" value="AAP98835.1"/>
    <property type="molecule type" value="Genomic_DNA"/>
</dbReference>
<dbReference type="PIR" id="C72024">
    <property type="entry name" value="C72024"/>
</dbReference>
<dbReference type="PIR" id="C86600">
    <property type="entry name" value="C86600"/>
</dbReference>
<dbReference type="RefSeq" id="NP_225072.1">
    <property type="nucleotide sequence ID" value="NC_000922.1"/>
</dbReference>
<dbReference type="RefSeq" id="WP_010883512.1">
    <property type="nucleotide sequence ID" value="NZ_LN847257.1"/>
</dbReference>
<dbReference type="SMR" id="Q9Z729"/>
<dbReference type="STRING" id="406984.CPK_ORF00284"/>
<dbReference type="GeneID" id="45050930"/>
<dbReference type="KEGG" id="cpa:CP_0992"/>
<dbReference type="KEGG" id="cpj:ybcL"/>
<dbReference type="KEGG" id="cpn:CPn_0877"/>
<dbReference type="KEGG" id="cpt:CpB0906"/>
<dbReference type="PATRIC" id="fig|115713.3.peg.957"/>
<dbReference type="eggNOG" id="COG1881">
    <property type="taxonomic scope" value="Bacteria"/>
</dbReference>
<dbReference type="HOGENOM" id="CLU_083918_3_2_0"/>
<dbReference type="OMA" id="HWAVANI"/>
<dbReference type="OrthoDB" id="9797506at2"/>
<dbReference type="Proteomes" id="UP000000583">
    <property type="component" value="Chromosome"/>
</dbReference>
<dbReference type="Proteomes" id="UP000000801">
    <property type="component" value="Chromosome"/>
</dbReference>
<dbReference type="CDD" id="cd00865">
    <property type="entry name" value="PEBP_bact_arch"/>
    <property type="match status" value="1"/>
</dbReference>
<dbReference type="Gene3D" id="3.90.280.10">
    <property type="entry name" value="PEBP-like"/>
    <property type="match status" value="1"/>
</dbReference>
<dbReference type="InterPro" id="IPR008914">
    <property type="entry name" value="PEBP"/>
</dbReference>
<dbReference type="InterPro" id="IPR036610">
    <property type="entry name" value="PEBP-like_sf"/>
</dbReference>
<dbReference type="InterPro" id="IPR005247">
    <property type="entry name" value="YbhB_YbcL/LppC-like"/>
</dbReference>
<dbReference type="NCBIfam" id="TIGR00481">
    <property type="entry name" value="YbhB/YbcL family Raf kinase inhibitor-like protein"/>
    <property type="match status" value="1"/>
</dbReference>
<dbReference type="PANTHER" id="PTHR30289:SF1">
    <property type="entry name" value="PEBP (PHOSPHATIDYLETHANOLAMINE-BINDING PROTEIN) FAMILY PROTEIN"/>
    <property type="match status" value="1"/>
</dbReference>
<dbReference type="PANTHER" id="PTHR30289">
    <property type="entry name" value="UNCHARACTERIZED PROTEIN YBCL-RELATED"/>
    <property type="match status" value="1"/>
</dbReference>
<dbReference type="Pfam" id="PF01161">
    <property type="entry name" value="PBP"/>
    <property type="match status" value="1"/>
</dbReference>
<dbReference type="SUPFAM" id="SSF49777">
    <property type="entry name" value="PEBP-like"/>
    <property type="match status" value="1"/>
</dbReference>
<organism>
    <name type="scientific">Chlamydia pneumoniae</name>
    <name type="common">Chlamydophila pneumoniae</name>
    <dbReference type="NCBI Taxonomy" id="83558"/>
    <lineage>
        <taxon>Bacteria</taxon>
        <taxon>Pseudomonadati</taxon>
        <taxon>Chlamydiota</taxon>
        <taxon>Chlamydiia</taxon>
        <taxon>Chlamydiales</taxon>
        <taxon>Chlamydiaceae</taxon>
        <taxon>Chlamydia/Chlamydophila group</taxon>
        <taxon>Chlamydia</taxon>
    </lineage>
</organism>
<sequence>MQLLSPAFAYGAPIPKKYTCQGAGISPPLTFVDVPGAAQSLALIVEDPDVPKEIRSDGLWIHWIVYNLSTTITNLAEGAEIFAVQGLNTSGKPVYEGPCPPDKQHRYFFTLFALDVVLPEEENVTRDQLYEAMEFHIIEQAELMGTYEKS</sequence>
<gene>
    <name type="ordered locus">CPn_0877</name>
    <name type="ordered locus">CP_0992</name>
    <name type="ordered locus">CPj0877</name>
    <name type="ordered locus">CpB0906</name>
</gene>
<name>Y877_CHLPN</name>
<proteinExistence type="inferred from homology"/>
<feature type="chain" id="PRO_0000137903" description="UPF0098 protein CPn_0877/CP_0992/CPj0877/CpB0906">
    <location>
        <begin position="1"/>
        <end position="150"/>
    </location>
</feature>
<accession>Q9Z729</accession>
<accession>Q9JQ64</accession>